<dbReference type="EC" id="2.7.11.5" evidence="1"/>
<dbReference type="EC" id="3.1.3.-" evidence="1"/>
<dbReference type="EMBL" id="CP000440">
    <property type="protein sequence ID" value="ABI88531.1"/>
    <property type="status" value="ALT_INIT"/>
    <property type="molecule type" value="Genomic_DNA"/>
</dbReference>
<dbReference type="RefSeq" id="WP_041491286.1">
    <property type="nucleotide sequence ID" value="NC_008390.1"/>
</dbReference>
<dbReference type="SMR" id="Q0BBE2"/>
<dbReference type="GeneID" id="93084823"/>
<dbReference type="KEGG" id="bam:Bamb_2975"/>
<dbReference type="PATRIC" id="fig|339670.21.peg.1901"/>
<dbReference type="eggNOG" id="COG4579">
    <property type="taxonomic scope" value="Bacteria"/>
</dbReference>
<dbReference type="Proteomes" id="UP000000662">
    <property type="component" value="Chromosome 1"/>
</dbReference>
<dbReference type="GO" id="GO:0005737">
    <property type="term" value="C:cytoplasm"/>
    <property type="evidence" value="ECO:0007669"/>
    <property type="project" value="UniProtKB-SubCell"/>
</dbReference>
<dbReference type="GO" id="GO:0008772">
    <property type="term" value="F:[isocitrate dehydrogenase (NADP+)] kinase activity"/>
    <property type="evidence" value="ECO:0007669"/>
    <property type="project" value="UniProtKB-UniRule"/>
</dbReference>
<dbReference type="GO" id="GO:0016208">
    <property type="term" value="F:AMP binding"/>
    <property type="evidence" value="ECO:0007669"/>
    <property type="project" value="TreeGrafter"/>
</dbReference>
<dbReference type="GO" id="GO:0005524">
    <property type="term" value="F:ATP binding"/>
    <property type="evidence" value="ECO:0007669"/>
    <property type="project" value="UniProtKB-UniRule"/>
</dbReference>
<dbReference type="GO" id="GO:0004721">
    <property type="term" value="F:phosphoprotein phosphatase activity"/>
    <property type="evidence" value="ECO:0007669"/>
    <property type="project" value="UniProtKB-KW"/>
</dbReference>
<dbReference type="GO" id="GO:0004674">
    <property type="term" value="F:protein serine/threonine kinase activity"/>
    <property type="evidence" value="ECO:0007669"/>
    <property type="project" value="UniProtKB-KW"/>
</dbReference>
<dbReference type="GO" id="GO:0006006">
    <property type="term" value="P:glucose metabolic process"/>
    <property type="evidence" value="ECO:0007669"/>
    <property type="project" value="InterPro"/>
</dbReference>
<dbReference type="GO" id="GO:0006097">
    <property type="term" value="P:glyoxylate cycle"/>
    <property type="evidence" value="ECO:0007669"/>
    <property type="project" value="UniProtKB-UniRule"/>
</dbReference>
<dbReference type="GO" id="GO:0006099">
    <property type="term" value="P:tricarboxylic acid cycle"/>
    <property type="evidence" value="ECO:0007669"/>
    <property type="project" value="UniProtKB-UniRule"/>
</dbReference>
<dbReference type="HAMAP" id="MF_00747">
    <property type="entry name" value="AceK"/>
    <property type="match status" value="1"/>
</dbReference>
<dbReference type="InterPro" id="IPR046855">
    <property type="entry name" value="AceK_kinase"/>
</dbReference>
<dbReference type="InterPro" id="IPR046854">
    <property type="entry name" value="AceK_regulatory"/>
</dbReference>
<dbReference type="InterPro" id="IPR010452">
    <property type="entry name" value="Isocitrate_DH_AceK"/>
</dbReference>
<dbReference type="NCBIfam" id="NF002804">
    <property type="entry name" value="PRK02946.1"/>
    <property type="match status" value="1"/>
</dbReference>
<dbReference type="PANTHER" id="PTHR39559">
    <property type="match status" value="1"/>
</dbReference>
<dbReference type="PANTHER" id="PTHR39559:SF1">
    <property type="entry name" value="ISOCITRATE DEHYDROGENASE KINASE_PHOSPHATASE"/>
    <property type="match status" value="1"/>
</dbReference>
<dbReference type="Pfam" id="PF06315">
    <property type="entry name" value="AceK_kinase"/>
    <property type="match status" value="1"/>
</dbReference>
<dbReference type="Pfam" id="PF20423">
    <property type="entry name" value="AceK_regulatory"/>
    <property type="match status" value="1"/>
</dbReference>
<dbReference type="PIRSF" id="PIRSF000719">
    <property type="entry name" value="AceK"/>
    <property type="match status" value="1"/>
</dbReference>
<name>ACEK_BURCM</name>
<organism>
    <name type="scientific">Burkholderia ambifaria (strain ATCC BAA-244 / DSM 16087 / CCUG 44356 / LMG 19182 / AMMD)</name>
    <name type="common">Burkholderia cepacia (strain AMMD)</name>
    <dbReference type="NCBI Taxonomy" id="339670"/>
    <lineage>
        <taxon>Bacteria</taxon>
        <taxon>Pseudomonadati</taxon>
        <taxon>Pseudomonadota</taxon>
        <taxon>Betaproteobacteria</taxon>
        <taxon>Burkholderiales</taxon>
        <taxon>Burkholderiaceae</taxon>
        <taxon>Burkholderia</taxon>
        <taxon>Burkholderia cepacia complex</taxon>
    </lineage>
</organism>
<reference key="1">
    <citation type="submission" date="2006-08" db="EMBL/GenBank/DDBJ databases">
        <title>Complete sequence of chromosome 1 of Burkholderia cepacia AMMD.</title>
        <authorList>
            <person name="Copeland A."/>
            <person name="Lucas S."/>
            <person name="Lapidus A."/>
            <person name="Barry K."/>
            <person name="Detter J.C."/>
            <person name="Glavina del Rio T."/>
            <person name="Hammon N."/>
            <person name="Israni S."/>
            <person name="Pitluck S."/>
            <person name="Bruce D."/>
            <person name="Chain P."/>
            <person name="Malfatti S."/>
            <person name="Shin M."/>
            <person name="Vergez L."/>
            <person name="Schmutz J."/>
            <person name="Larimer F."/>
            <person name="Land M."/>
            <person name="Hauser L."/>
            <person name="Kyrpides N."/>
            <person name="Kim E."/>
            <person name="Parke J."/>
            <person name="Coenye T."/>
            <person name="Konstantinidis K."/>
            <person name="Ramette A."/>
            <person name="Tiedje J."/>
            <person name="Richardson P."/>
        </authorList>
    </citation>
    <scope>NUCLEOTIDE SEQUENCE [LARGE SCALE GENOMIC DNA]</scope>
    <source>
        <strain>ATCC BAA-244 / DSM 16087 / CCUG 44356 / LMG 19182 / AMMD</strain>
    </source>
</reference>
<evidence type="ECO:0000255" key="1">
    <source>
        <dbReference type="HAMAP-Rule" id="MF_00747"/>
    </source>
</evidence>
<evidence type="ECO:0000305" key="2"/>
<proteinExistence type="inferred from homology"/>
<accession>Q0BBE2</accession>
<keyword id="KW-0067">ATP-binding</keyword>
<keyword id="KW-0963">Cytoplasm</keyword>
<keyword id="KW-0329">Glyoxylate bypass</keyword>
<keyword id="KW-0378">Hydrolase</keyword>
<keyword id="KW-0418">Kinase</keyword>
<keyword id="KW-0547">Nucleotide-binding</keyword>
<keyword id="KW-0904">Protein phosphatase</keyword>
<keyword id="KW-0723">Serine/threonine-protein kinase</keyword>
<keyword id="KW-0808">Transferase</keyword>
<keyword id="KW-0816">Tricarboxylic acid cycle</keyword>
<sequence>MNHFPKLLSSQIGFDVAQTMLENFDRHYRIFREAAVDAKTLYERADWHGLQRLARERITSYDDRVQECVEVLQDEYDAENIDDEVWQQIKLHYIGLLTSHRQPECAETFFNSVCCKILHRSYFSNDFIFVRPAISTEYLENDEPAAKPTYRAYYPGTDGLAATLERIVTNFQLEPPFEDLTRDIGCVMQAITDEFGEFDAAPNFQIHVLSSLFFRNKSAYIVGRIINADRVLPFAVPIRHVRPGLLALDTLLLRRDLLQIIFSFSHSYFLVDMGVPSAYVEFLCTIMPGKPKAEIYTSVGLQKQGKNLFYRDLLHHLSHSSDRFIIAPGIKGLVMLVFTLPSFPYVFKIIKDHFPPPKETTREQIMEKYQLVKRHDRLGRMADTLEYSSVALPISRLDHALVRELEKEVPSLLEYEDGNLVIKHLYIERRMIPLNLYLQNGTDAEIEHGVKEYGNAVKELMKANIFPGDMLYKNFGVTRHGRVVFYDYDEIEYLTDCNVRRVPPPRNEEDELSGEPWYTVGPHDIFPETYGPFLLGDPRVRAVFMKHHADFFEASLWQASKDKLLQGELPDFFPYDVSLRFSVRYPDRFDATPDAGDGDSAGNAQRAA</sequence>
<feature type="chain" id="PRO_0000288284" description="Isocitrate dehydrogenase kinase/phosphatase">
    <location>
        <begin position="1"/>
        <end position="608"/>
    </location>
</feature>
<feature type="active site" evidence="1">
    <location>
        <position position="383"/>
    </location>
</feature>
<feature type="binding site" evidence="1">
    <location>
        <begin position="327"/>
        <end position="333"/>
    </location>
    <ligand>
        <name>ATP</name>
        <dbReference type="ChEBI" id="CHEBI:30616"/>
    </ligand>
</feature>
<feature type="binding site" evidence="1">
    <location>
        <position position="348"/>
    </location>
    <ligand>
        <name>ATP</name>
        <dbReference type="ChEBI" id="CHEBI:30616"/>
    </ligand>
</feature>
<protein>
    <recommendedName>
        <fullName evidence="1">Isocitrate dehydrogenase kinase/phosphatase</fullName>
        <shortName evidence="1">IDH kinase/phosphatase</shortName>
        <shortName evidence="1">IDHK/P</shortName>
        <ecNumber evidence="1">2.7.11.5</ecNumber>
        <ecNumber evidence="1">3.1.3.-</ecNumber>
    </recommendedName>
</protein>
<gene>
    <name evidence="1" type="primary">aceK</name>
    <name type="ordered locus">Bamb_2975</name>
</gene>
<comment type="function">
    <text evidence="1">Bifunctional enzyme which can phosphorylate or dephosphorylate isocitrate dehydrogenase (IDH) on a specific serine residue. This is a regulatory mechanism which enables bacteria to bypass the Krebs cycle via the glyoxylate shunt in response to the source of carbon. When bacteria are grown on glucose, IDH is fully active and unphosphorylated, but when grown on acetate or ethanol, the activity of IDH declines drastically concomitant with its phosphorylation.</text>
</comment>
<comment type="catalytic activity">
    <reaction evidence="1">
        <text>L-seryl-[isocitrate dehydrogenase] + ATP = O-phospho-L-seryl-[isocitrate dehydrogenase] + ADP + H(+)</text>
        <dbReference type="Rhea" id="RHEA:43540"/>
        <dbReference type="Rhea" id="RHEA-COMP:10605"/>
        <dbReference type="Rhea" id="RHEA-COMP:10606"/>
        <dbReference type="ChEBI" id="CHEBI:15378"/>
        <dbReference type="ChEBI" id="CHEBI:29999"/>
        <dbReference type="ChEBI" id="CHEBI:30616"/>
        <dbReference type="ChEBI" id="CHEBI:83421"/>
        <dbReference type="ChEBI" id="CHEBI:456216"/>
        <dbReference type="EC" id="2.7.11.5"/>
    </reaction>
</comment>
<comment type="subcellular location">
    <subcellularLocation>
        <location evidence="1">Cytoplasm</location>
    </subcellularLocation>
</comment>
<comment type="similarity">
    <text evidence="1">Belongs to the AceK family.</text>
</comment>
<comment type="sequence caution" evidence="2">
    <conflict type="erroneous initiation">
        <sequence resource="EMBL-CDS" id="ABI88531"/>
    </conflict>
</comment>